<proteinExistence type="inferred from homology"/>
<organism>
    <name type="scientific">Solanum tuberosum</name>
    <name type="common">Potato</name>
    <dbReference type="NCBI Taxonomy" id="4113"/>
    <lineage>
        <taxon>Eukaryota</taxon>
        <taxon>Viridiplantae</taxon>
        <taxon>Streptophyta</taxon>
        <taxon>Embryophyta</taxon>
        <taxon>Tracheophyta</taxon>
        <taxon>Spermatophyta</taxon>
        <taxon>Magnoliopsida</taxon>
        <taxon>eudicotyledons</taxon>
        <taxon>Gunneridae</taxon>
        <taxon>Pentapetalae</taxon>
        <taxon>asterids</taxon>
        <taxon>lamiids</taxon>
        <taxon>Solanales</taxon>
        <taxon>Solanaceae</taxon>
        <taxon>Solanoideae</taxon>
        <taxon>Solaneae</taxon>
        <taxon>Solanum</taxon>
    </lineage>
</organism>
<protein>
    <recommendedName>
        <fullName>Proteinase inhibitor type-2</fullName>
    </recommendedName>
    <alternativeName>
        <fullName>Proteinase inhibitor type II</fullName>
    </alternativeName>
</protein>
<feature type="signal peptide" evidence="2">
    <location>
        <begin position="1"/>
        <end position="25"/>
    </location>
</feature>
<feature type="chain" id="PRO_0000025319" description="Proteinase inhibitor type-2">
    <location>
        <begin position="26"/>
        <end position="147"/>
    </location>
</feature>
<feature type="repeat" description="1">
    <location>
        <begin position="25"/>
        <end position="81"/>
    </location>
</feature>
<feature type="repeat" description="2">
    <location>
        <begin position="82"/>
        <end position="141"/>
    </location>
</feature>
<feature type="site" description="Reactive bond for trypsin" evidence="3">
    <location>
        <begin position="30"/>
        <end position="31"/>
    </location>
</feature>
<feature type="site" description="Reactive bond for chymotrypsin" evidence="3">
    <location>
        <begin position="87"/>
        <end position="88"/>
    </location>
</feature>
<feature type="disulfide bond" evidence="1">
    <location>
        <begin position="28"/>
        <end position="116"/>
    </location>
</feature>
<feature type="disulfide bond" evidence="1">
    <location>
        <begin position="32"/>
        <end position="112"/>
    </location>
</feature>
<feature type="disulfide bond" evidence="1">
    <location>
        <begin position="40"/>
        <end position="122"/>
    </location>
</feature>
<feature type="disulfide bond" evidence="1">
    <location>
        <begin position="52"/>
        <end position="89"/>
    </location>
</feature>
<feature type="disulfide bond" evidence="1">
    <location>
        <begin position="55"/>
        <end position="73"/>
    </location>
</feature>
<feature type="disulfide bond" evidence="1">
    <location>
        <begin position="56"/>
        <end position="85"/>
    </location>
</feature>
<feature type="disulfide bond" evidence="1">
    <location>
        <begin position="62"/>
        <end position="98"/>
    </location>
</feature>
<feature type="disulfide bond" evidence="1">
    <location>
        <begin position="115"/>
        <end position="133"/>
    </location>
</feature>
<name>IP2Y_SOLTU</name>
<comment type="similarity">
    <text evidence="3">Belongs to the protease inhibitor I20 (potato type II proteinase inhibitor) family.</text>
</comment>
<reference key="1">
    <citation type="submission" date="1992-07" db="EMBL/GenBank/DDBJ databases">
        <authorList>
            <person name="Choi Y."/>
            <person name="Kim J.W."/>
            <person name="Lee J.S."/>
        </authorList>
    </citation>
    <scope>NUCLEOTIDE SEQUENCE [GENOMIC DNA]</scope>
    <source>
        <strain>cv. Russet Burbank-0</strain>
    </source>
</reference>
<evidence type="ECO:0000250" key="1"/>
<evidence type="ECO:0000255" key="2"/>
<evidence type="ECO:0000305" key="3"/>
<accession>Q41489</accession>
<keyword id="KW-1015">Disulfide bond</keyword>
<keyword id="KW-0646">Protease inhibitor</keyword>
<keyword id="KW-1185">Reference proteome</keyword>
<keyword id="KW-0677">Repeat</keyword>
<keyword id="KW-0722">Serine protease inhibitor</keyword>
<keyword id="KW-0732">Signal</keyword>
<sequence length="147" mass="15936">MAVHKEVSFVAYLLIVLGMFLYVDALGCTKECGNLGFGICPRSEGSPTNPICINCCSGYKGCNYYSAFGRFICEGESDPKNPKACPLNCDTNIAYSRCPRSEGKSLIYPTGCTTCCTGYKGCYYFGTNGKFVCEGESDEPKPYMSTA</sequence>
<dbReference type="EMBL" id="Z13992">
    <property type="protein sequence ID" value="CAA78383.1"/>
    <property type="molecule type" value="Genomic_DNA"/>
</dbReference>
<dbReference type="PIR" id="S24973">
    <property type="entry name" value="S24973"/>
</dbReference>
<dbReference type="SMR" id="Q41489"/>
<dbReference type="MEROPS" id="I20.003"/>
<dbReference type="MEROPS" id="I20.950"/>
<dbReference type="InParanoid" id="Q41489"/>
<dbReference type="Proteomes" id="UP000011115">
    <property type="component" value="Unassembled WGS sequence"/>
</dbReference>
<dbReference type="ExpressionAtlas" id="Q41489">
    <property type="expression patterns" value="baseline and differential"/>
</dbReference>
<dbReference type="GO" id="GO:0004867">
    <property type="term" value="F:serine-type endopeptidase inhibitor activity"/>
    <property type="evidence" value="ECO:0007669"/>
    <property type="project" value="UniProtKB-KW"/>
</dbReference>
<dbReference type="Gene3D" id="3.30.60.30">
    <property type="match status" value="2"/>
</dbReference>
<dbReference type="InterPro" id="IPR003465">
    <property type="entry name" value="Prot_inh_I20"/>
</dbReference>
<dbReference type="InterPro" id="IPR051391">
    <property type="entry name" value="Protease_inhibitor_I20"/>
</dbReference>
<dbReference type="PANTHER" id="PTHR33832">
    <property type="entry name" value="SERINE-TYPE ENDOPEPTIDASE INHIBITOR"/>
    <property type="match status" value="1"/>
</dbReference>
<dbReference type="PANTHER" id="PTHR33832:SF20">
    <property type="entry name" value="WOUND-INDUCED PROTEINASE INHIBITOR 2"/>
    <property type="match status" value="1"/>
</dbReference>
<dbReference type="Pfam" id="PF02428">
    <property type="entry name" value="Prot_inhib_II"/>
    <property type="match status" value="2"/>
</dbReference>
<dbReference type="SUPFAM" id="SSF100897">
    <property type="entry name" value="Plant proteinase inhibitors"/>
    <property type="match status" value="1"/>
</dbReference>